<keyword id="KW-0002">3D-structure</keyword>
<keyword id="KW-0963">Cytoplasm</keyword>
<keyword id="KW-0903">Direct protein sequencing</keyword>
<keyword id="KW-0259">Enterobactin biosynthesis</keyword>
<keyword id="KW-0378">Hydrolase</keyword>
<keyword id="KW-0436">Ligase</keyword>
<keyword id="KW-0460">Magnesium</keyword>
<keyword id="KW-0479">Metal-binding</keyword>
<keyword id="KW-0511">Multifunctional enzyme</keyword>
<keyword id="KW-0596">Phosphopantetheine</keyword>
<keyword id="KW-0597">Phosphoprotein</keyword>
<keyword id="KW-1185">Reference proteome</keyword>
<organism>
    <name type="scientific">Escherichia coli (strain K12)</name>
    <dbReference type="NCBI Taxonomy" id="83333"/>
    <lineage>
        <taxon>Bacteria</taxon>
        <taxon>Pseudomonadati</taxon>
        <taxon>Pseudomonadota</taxon>
        <taxon>Gammaproteobacteria</taxon>
        <taxon>Enterobacterales</taxon>
        <taxon>Enterobacteriaceae</taxon>
        <taxon>Escherichia</taxon>
    </lineage>
</organism>
<name>ENTB_ECOLI</name>
<gene>
    <name evidence="18" type="primary">entB</name>
    <name evidence="17" type="synonym">entG</name>
    <name type="ordered locus">b0595</name>
    <name type="ordered locus">JW0587</name>
</gene>
<feature type="initiator methionine" description="Removed" evidence="7">
    <location>
        <position position="1"/>
    </location>
</feature>
<feature type="chain" id="PRO_0000201822" description="Enterobactin synthase component B">
    <location>
        <begin position="2"/>
        <end position="285"/>
    </location>
</feature>
<feature type="domain" description="Carrier" evidence="1">
    <location>
        <begin position="209"/>
        <end position="284"/>
    </location>
</feature>
<feature type="region of interest" description="Isochorismatase" evidence="20">
    <location>
        <begin position="2"/>
        <end position="213"/>
    </location>
</feature>
<feature type="binding site" evidence="4 23">
    <location>
        <position position="227"/>
    </location>
    <ligand>
        <name>Mg(2+)</name>
        <dbReference type="ChEBI" id="CHEBI:18420"/>
    </ligand>
</feature>
<feature type="binding site" evidence="4 23">
    <location>
        <position position="242"/>
    </location>
    <ligand>
        <name>Mg(2+)</name>
        <dbReference type="ChEBI" id="CHEBI:18420"/>
    </ligand>
</feature>
<feature type="binding site" evidence="4 23">
    <location>
        <position position="244"/>
    </location>
    <ligand>
        <name>Mg(2+)</name>
        <dbReference type="ChEBI" id="CHEBI:18420"/>
    </ligand>
</feature>
<feature type="modified residue" description="O-(pantetheine 4'-phosphoryl)serine" evidence="10 24">
    <location>
        <position position="245"/>
    </location>
</feature>
<feature type="mutagenesis site" description="The catalytic efficiency slightly increases, but a 8-fold decrease of the affinity for the S-dihydroxybenzoyltransferase EntE is observed." evidence="4">
    <original>D</original>
    <variation>R</variation>
    <location>
        <position position="240"/>
    </location>
</feature>
<feature type="mutagenesis site" description="Not efficiently phosphopantetheinylated by EntD." evidence="5">
    <original>G</original>
    <variation>A</variation>
    <location>
        <position position="242"/>
    </location>
</feature>
<feature type="mutagenesis site" description="Efficiently phosphopantetheinylated by EntD." evidence="5">
    <original>D</original>
    <variation>A</variation>
    <location>
        <position position="244"/>
    </location>
</feature>
<feature type="mutagenesis site" description="Not efficiently phosphopantetheinylated by EntD." evidence="5">
    <original>D</original>
    <variation>R</variation>
    <location>
        <position position="244"/>
    </location>
</feature>
<feature type="mutagenesis site" description="Unable to recognize EntE and EntF. Exhibits a decrease in the enterobactin production compared to the wild-type. Still able to be phosphopantetheinylated." evidence="3">
    <original>M</original>
    <variation>A</variation>
    <location>
        <position position="249"/>
    </location>
</feature>
<feature type="mutagenesis site" description="The catalytic efficiency is the same as the wild-type, but a 3-fold decrease of the affinity for the S-dihydroxybenzoyltransferase EntE is observed." evidence="4">
    <original>D</original>
    <variation>R</variation>
    <location>
        <position position="263"/>
    </location>
</feature>
<feature type="mutagenesis site" description="The affinity for EntE and catalytic efficiency of the S-dihydroxybenzoyltransferase EntE are below that of the wild-type." evidence="3 4">
    <original>F</original>
    <variation>E</variation>
    <location>
        <position position="264"/>
    </location>
</feature>
<feature type="mutagenesis site" description="Unable to recognize EntE and EntF. Exhibits a decrease in the enterobactin production compared to the wild-type. Still able to be phosphopantetheinylated." evidence="3">
    <original>A</original>
    <variation>Q</variation>
    <location>
        <position position="268"/>
    </location>
</feature>
<feature type="mutagenesis site" description="Behaves similarly to the wild-type." evidence="3">
    <original>K</original>
    <variation>A</variation>
    <location>
        <position position="269"/>
    </location>
</feature>
<feature type="helix" evidence="25">
    <location>
        <begin position="14"/>
        <end position="16"/>
    </location>
</feature>
<feature type="helix" evidence="25">
    <location>
        <begin position="28"/>
        <end position="30"/>
    </location>
</feature>
<feature type="strand" evidence="25">
    <location>
        <begin position="31"/>
        <end position="36"/>
    </location>
</feature>
<feature type="helix" evidence="25">
    <location>
        <begin position="40"/>
        <end position="43"/>
    </location>
</feature>
<feature type="helix" evidence="25">
    <location>
        <begin position="51"/>
        <end position="69"/>
    </location>
</feature>
<feature type="strand" evidence="25">
    <location>
        <begin position="74"/>
        <end position="78"/>
    </location>
</feature>
<feature type="helix" evidence="25">
    <location>
        <begin position="85"/>
        <end position="88"/>
    </location>
</feature>
<feature type="helix" evidence="25">
    <location>
        <begin position="91"/>
        <end position="95"/>
    </location>
</feature>
<feature type="helix" evidence="25">
    <location>
        <begin position="98"/>
        <end position="101"/>
    </location>
</feature>
<feature type="helix" evidence="25">
    <location>
        <begin position="103"/>
        <end position="105"/>
    </location>
</feature>
<feature type="helix" evidence="25">
    <location>
        <begin position="110"/>
        <end position="112"/>
    </location>
</feature>
<feature type="strand" evidence="25">
    <location>
        <begin position="118"/>
        <end position="122"/>
    </location>
</feature>
<feature type="strand" evidence="25">
    <location>
        <begin position="125"/>
        <end position="127"/>
    </location>
</feature>
<feature type="turn" evidence="25">
    <location>
        <begin position="128"/>
        <end position="131"/>
    </location>
</feature>
<feature type="helix" evidence="25">
    <location>
        <begin position="134"/>
        <end position="140"/>
    </location>
</feature>
<feature type="strand" evidence="25">
    <location>
        <begin position="145"/>
        <end position="151"/>
    </location>
</feature>
<feature type="turn" evidence="25">
    <location>
        <begin position="153"/>
        <end position="155"/>
    </location>
</feature>
<feature type="helix" evidence="25">
    <location>
        <begin position="156"/>
        <end position="166"/>
    </location>
</feature>
<feature type="strand" evidence="25">
    <location>
        <begin position="170"/>
        <end position="179"/>
    </location>
</feature>
<feature type="helix" evidence="25">
    <location>
        <begin position="183"/>
        <end position="196"/>
    </location>
</feature>
<feature type="strand" evidence="25">
    <location>
        <begin position="199"/>
        <end position="201"/>
    </location>
</feature>
<feature type="helix" evidence="25">
    <location>
        <begin position="203"/>
        <end position="206"/>
    </location>
</feature>
<feature type="strand" evidence="25">
    <location>
        <begin position="207"/>
        <end position="209"/>
    </location>
</feature>
<feature type="helix" evidence="25">
    <location>
        <begin position="215"/>
        <end position="222"/>
    </location>
</feature>
<feature type="helix" evidence="25">
    <location>
        <begin position="223"/>
        <end position="225"/>
    </location>
</feature>
<feature type="helix" evidence="25">
    <location>
        <begin position="239"/>
        <end position="241"/>
    </location>
</feature>
<feature type="helix" evidence="25">
    <location>
        <begin position="247"/>
        <end position="255"/>
    </location>
</feature>
<feature type="turn" evidence="25">
    <location>
        <begin position="256"/>
        <end position="258"/>
    </location>
</feature>
<feature type="helix" evidence="25">
    <location>
        <begin position="264"/>
        <end position="268"/>
    </location>
</feature>
<feature type="helix" evidence="25">
    <location>
        <begin position="273"/>
        <end position="281"/>
    </location>
</feature>
<evidence type="ECO:0000255" key="1">
    <source>
        <dbReference type="PROSITE-ProRule" id="PRU00258"/>
    </source>
</evidence>
<evidence type="ECO:0000269" key="2">
    <source>
    </source>
</evidence>
<evidence type="ECO:0000269" key="3">
    <source>
    </source>
</evidence>
<evidence type="ECO:0000269" key="4">
    <source>
    </source>
</evidence>
<evidence type="ECO:0000269" key="5">
    <source>
    </source>
</evidence>
<evidence type="ECO:0000269" key="6">
    <source>
    </source>
</evidence>
<evidence type="ECO:0000269" key="7">
    <source>
    </source>
</evidence>
<evidence type="ECO:0000269" key="8">
    <source>
    </source>
</evidence>
<evidence type="ECO:0000269" key="9">
    <source>
    </source>
</evidence>
<evidence type="ECO:0000269" key="10">
    <source>
    </source>
</evidence>
<evidence type="ECO:0000269" key="11">
    <source>
    </source>
</evidence>
<evidence type="ECO:0000269" key="12">
    <source>
    </source>
</evidence>
<evidence type="ECO:0000269" key="13">
    <source>
    </source>
</evidence>
<evidence type="ECO:0000269" key="14">
    <source>
    </source>
</evidence>
<evidence type="ECO:0000269" key="15">
    <source>
    </source>
</evidence>
<evidence type="ECO:0000303" key="16">
    <source>
    </source>
</evidence>
<evidence type="ECO:0000303" key="17">
    <source>
    </source>
</evidence>
<evidence type="ECO:0000303" key="18">
    <source>
    </source>
</evidence>
<evidence type="ECO:0000303" key="19">
    <source>
    </source>
</evidence>
<evidence type="ECO:0000303" key="20">
    <source>
    </source>
</evidence>
<evidence type="ECO:0000305" key="21"/>
<evidence type="ECO:0000305" key="22">
    <source>
    </source>
</evidence>
<evidence type="ECO:0007744" key="23">
    <source>
        <dbReference type="PDB" id="2FQ1"/>
    </source>
</evidence>
<evidence type="ECO:0007744" key="24">
    <source>
        <dbReference type="PDB" id="3RG2"/>
    </source>
</evidence>
<evidence type="ECO:0007829" key="25">
    <source>
        <dbReference type="PDB" id="2FQ1"/>
    </source>
</evidence>
<dbReference type="EC" id="6.3.2.14" evidence="4 7 14 15"/>
<dbReference type="EC" id="3.3.2.1" evidence="4 7 14 15"/>
<dbReference type="EMBL" id="M24148">
    <property type="protein sequence ID" value="AAA16102.1"/>
    <property type="molecule type" value="Unassigned_DNA"/>
</dbReference>
<dbReference type="EMBL" id="M24143">
    <property type="protein sequence ID" value="AAA76835.1"/>
    <property type="molecule type" value="Genomic_DNA"/>
</dbReference>
<dbReference type="EMBL" id="U82598">
    <property type="protein sequence ID" value="AAB40795.1"/>
    <property type="molecule type" value="Genomic_DNA"/>
</dbReference>
<dbReference type="EMBL" id="U00096">
    <property type="protein sequence ID" value="AAC73696.1"/>
    <property type="molecule type" value="Genomic_DNA"/>
</dbReference>
<dbReference type="EMBL" id="AP009048">
    <property type="protein sequence ID" value="BAE76350.1"/>
    <property type="molecule type" value="Genomic_DNA"/>
</dbReference>
<dbReference type="PIR" id="C91904">
    <property type="entry name" value="YXECIC"/>
</dbReference>
<dbReference type="RefSeq" id="NP_415127.1">
    <property type="nucleotide sequence ID" value="NC_000913.3"/>
</dbReference>
<dbReference type="RefSeq" id="WP_001007138.1">
    <property type="nucleotide sequence ID" value="NZ_SSUV01000008.1"/>
</dbReference>
<dbReference type="PDB" id="2FQ1">
    <property type="method" value="X-ray"/>
    <property type="resolution" value="2.30 A"/>
    <property type="chains" value="A/B=1-285"/>
</dbReference>
<dbReference type="PDB" id="3RG2">
    <property type="method" value="X-ray"/>
    <property type="resolution" value="3.10 A"/>
    <property type="chains" value="A/B/C/D/E/F/G/H/I/J=209-285"/>
</dbReference>
<dbReference type="PDB" id="4IZ6">
    <property type="method" value="X-ray"/>
    <property type="resolution" value="2.40 A"/>
    <property type="chains" value="A/B=211-285"/>
</dbReference>
<dbReference type="PDBsum" id="2FQ1"/>
<dbReference type="PDBsum" id="3RG2"/>
<dbReference type="PDBsum" id="4IZ6"/>
<dbReference type="SMR" id="P0ADI4"/>
<dbReference type="BioGRID" id="4260905">
    <property type="interactions" value="218"/>
</dbReference>
<dbReference type="BioGRID" id="850538">
    <property type="interactions" value="5"/>
</dbReference>
<dbReference type="ComplexPortal" id="CPX-5748">
    <property type="entry name" value="entBE aryl carrier complex"/>
</dbReference>
<dbReference type="DIP" id="DIP-9512N"/>
<dbReference type="FunCoup" id="P0ADI4">
    <property type="interactions" value="410"/>
</dbReference>
<dbReference type="IntAct" id="P0ADI4">
    <property type="interactions" value="29"/>
</dbReference>
<dbReference type="STRING" id="511145.b0595"/>
<dbReference type="jPOST" id="P0ADI4"/>
<dbReference type="PaxDb" id="511145-b0595"/>
<dbReference type="EnsemblBacteria" id="AAC73696">
    <property type="protein sequence ID" value="AAC73696"/>
    <property type="gene ID" value="b0595"/>
</dbReference>
<dbReference type="GeneID" id="946178"/>
<dbReference type="KEGG" id="ecj:JW0587"/>
<dbReference type="KEGG" id="eco:b0595"/>
<dbReference type="KEGG" id="ecoc:C3026_02970"/>
<dbReference type="PATRIC" id="fig|1411691.4.peg.1674"/>
<dbReference type="EchoBASE" id="EB0256"/>
<dbReference type="eggNOG" id="COG1535">
    <property type="taxonomic scope" value="Bacteria"/>
</dbReference>
<dbReference type="eggNOG" id="COG3433">
    <property type="taxonomic scope" value="Bacteria"/>
</dbReference>
<dbReference type="HOGENOM" id="CLU_068979_2_0_6"/>
<dbReference type="InParanoid" id="P0ADI4"/>
<dbReference type="OMA" id="RDIKPFF"/>
<dbReference type="OrthoDB" id="5794853at2"/>
<dbReference type="PhylomeDB" id="P0ADI4"/>
<dbReference type="BioCyc" id="EcoCyc:ENTB-MONOMER"/>
<dbReference type="BioCyc" id="MetaCyc:ENTB-MONOMER"/>
<dbReference type="BRENDA" id="3.3.2.1">
    <property type="organism ID" value="2026"/>
</dbReference>
<dbReference type="BRENDA" id="6.3.2.14">
    <property type="organism ID" value="2026"/>
</dbReference>
<dbReference type="SABIO-RK" id="P0ADI4"/>
<dbReference type="UniPathway" id="UPA00017"/>
<dbReference type="EvolutionaryTrace" id="P0ADI4"/>
<dbReference type="PRO" id="PR:P0ADI4"/>
<dbReference type="Proteomes" id="UP000000625">
    <property type="component" value="Chromosome"/>
</dbReference>
<dbReference type="GO" id="GO:0005829">
    <property type="term" value="C:cytosol"/>
    <property type="evidence" value="ECO:0000314"/>
    <property type="project" value="EcoCyc"/>
</dbReference>
<dbReference type="GO" id="GO:0005886">
    <property type="term" value="C:plasma membrane"/>
    <property type="evidence" value="ECO:0000314"/>
    <property type="project" value="EcoCyc"/>
</dbReference>
<dbReference type="GO" id="GO:0047527">
    <property type="term" value="F:2,3-dihydroxybenzoate-serine ligase activity"/>
    <property type="evidence" value="ECO:0000314"/>
    <property type="project" value="UniProtKB"/>
</dbReference>
<dbReference type="GO" id="GO:0042802">
    <property type="term" value="F:identical protein binding"/>
    <property type="evidence" value="ECO:0000353"/>
    <property type="project" value="IntAct"/>
</dbReference>
<dbReference type="GO" id="GO:0008908">
    <property type="term" value="F:isochorismatase activity"/>
    <property type="evidence" value="ECO:0000314"/>
    <property type="project" value="UniProtKB"/>
</dbReference>
<dbReference type="GO" id="GO:0000287">
    <property type="term" value="F:magnesium ion binding"/>
    <property type="evidence" value="ECO:0000314"/>
    <property type="project" value="UniProtKB"/>
</dbReference>
<dbReference type="GO" id="GO:0031177">
    <property type="term" value="F:phosphopantetheine binding"/>
    <property type="evidence" value="ECO:0000314"/>
    <property type="project" value="UniProtKB"/>
</dbReference>
<dbReference type="GO" id="GO:0016765">
    <property type="term" value="F:transferase activity, transferring alkyl or aryl (other than methyl) groups"/>
    <property type="evidence" value="ECO:0000315"/>
    <property type="project" value="EcoliWiki"/>
</dbReference>
<dbReference type="GO" id="GO:0009239">
    <property type="term" value="P:enterobactin biosynthetic process"/>
    <property type="evidence" value="ECO:0000314"/>
    <property type="project" value="UniProtKB"/>
</dbReference>
<dbReference type="CDD" id="cd01013">
    <property type="entry name" value="isochorismatase"/>
    <property type="match status" value="1"/>
</dbReference>
<dbReference type="FunFam" id="1.10.1200.10:FF:000009">
    <property type="entry name" value="Isochorismatase"/>
    <property type="match status" value="1"/>
</dbReference>
<dbReference type="FunFam" id="3.40.50.850:FF:000002">
    <property type="entry name" value="Vibriobactin-specific isochorismatase"/>
    <property type="match status" value="1"/>
</dbReference>
<dbReference type="Gene3D" id="1.10.1200.10">
    <property type="entry name" value="ACP-like"/>
    <property type="match status" value="1"/>
</dbReference>
<dbReference type="Gene3D" id="3.40.50.850">
    <property type="entry name" value="Isochorismatase-like"/>
    <property type="match status" value="1"/>
</dbReference>
<dbReference type="InterPro" id="IPR036736">
    <property type="entry name" value="ACP-like_sf"/>
</dbReference>
<dbReference type="InterPro" id="IPR016291">
    <property type="entry name" value="Isochorismatase"/>
</dbReference>
<dbReference type="InterPro" id="IPR000868">
    <property type="entry name" value="Isochorismatase-like_dom"/>
</dbReference>
<dbReference type="InterPro" id="IPR050272">
    <property type="entry name" value="Isochorismatase-like_hydrls"/>
</dbReference>
<dbReference type="InterPro" id="IPR036380">
    <property type="entry name" value="Isochorismatase-like_sf"/>
</dbReference>
<dbReference type="InterPro" id="IPR009081">
    <property type="entry name" value="PP-bd_ACP"/>
</dbReference>
<dbReference type="PANTHER" id="PTHR43540:SF3">
    <property type="entry name" value="ENTEROBACTIN SYNTHASE COMPONENT B"/>
    <property type="match status" value="1"/>
</dbReference>
<dbReference type="PANTHER" id="PTHR43540">
    <property type="entry name" value="PEROXYUREIDOACRYLATE/UREIDOACRYLATE AMIDOHYDROLASE-RELATED"/>
    <property type="match status" value="1"/>
</dbReference>
<dbReference type="Pfam" id="PF00857">
    <property type="entry name" value="Isochorismatase"/>
    <property type="match status" value="1"/>
</dbReference>
<dbReference type="Pfam" id="PF00550">
    <property type="entry name" value="PP-binding"/>
    <property type="match status" value="1"/>
</dbReference>
<dbReference type="PIRSF" id="PIRSF001111">
    <property type="entry name" value="Isochorismatase"/>
    <property type="match status" value="1"/>
</dbReference>
<dbReference type="PRINTS" id="PR01398">
    <property type="entry name" value="ISCHRISMTASE"/>
</dbReference>
<dbReference type="SUPFAM" id="SSF47336">
    <property type="entry name" value="ACP-like"/>
    <property type="match status" value="1"/>
</dbReference>
<dbReference type="SUPFAM" id="SSF52499">
    <property type="entry name" value="Isochorismatase-like hydrolases"/>
    <property type="match status" value="1"/>
</dbReference>
<dbReference type="PROSITE" id="PS50075">
    <property type="entry name" value="CARRIER"/>
    <property type="match status" value="1"/>
</dbReference>
<protein>
    <recommendedName>
        <fullName evidence="19">Enterobactin synthase component B</fullName>
        <ecNumber evidence="4 7 14 15">6.3.2.14</ecNumber>
    </recommendedName>
    <alternativeName>
        <fullName evidence="20">Enterobactin biosynthesis bifunctional protein EntB</fullName>
    </alternativeName>
    <alternativeName>
        <fullName evidence="19">Enterochelin synthase B</fullName>
    </alternativeName>
    <domain>
        <recommendedName>
            <fullName evidence="16">Isochorismatase</fullName>
            <ecNumber evidence="4 7 14 15">3.3.2.1</ecNumber>
        </recommendedName>
        <alternativeName>
            <fullName evidence="16">2,3-dihydro-2,3-dihydroxybenzoate synthase</fullName>
        </alternativeName>
        <alternativeName>
            <fullName evidence="16">Isochorismate lyase</fullName>
        </alternativeName>
    </domain>
    <domain>
        <recommendedName>
            <fullName evidence="20">Aryl carrier protein</fullName>
            <shortName evidence="20">ArCP</shortName>
        </recommendedName>
    </domain>
</protein>
<accession>P0ADI4</accession>
<accession>P15048</accession>
<accession>Q2MBK6</accession>
<reference key="1">
    <citation type="journal article" date="1989" name="J. Bacteriol.">
        <title>Nucleotide sequence and transcriptional organization of the Escherichia coli enterobactin biosynthesis cistrons entB and entA.</title>
        <authorList>
            <person name="Nahlik M.S."/>
            <person name="Brickman T.J."/>
            <person name="Ozenberger B.A."/>
            <person name="McIntosh M.A."/>
        </authorList>
    </citation>
    <scope>NUCLEOTIDE SEQUENCE [GENOMIC DNA]</scope>
    <scope>INDUCTION</scope>
</reference>
<reference key="2">
    <citation type="journal article" date="1989" name="J. Bacteriol.">
        <title>Nucleotide sequence of a cluster of Escherichia coli enterobactin biosynthesis genes: identification of entA and purification of its product 2,3-dihydro-2,3-dihydroxybenzoate dehydrogenase.</title>
        <authorList>
            <person name="Liu J."/>
            <person name="Duncan K."/>
            <person name="Walsh C.T."/>
        </authorList>
    </citation>
    <scope>NUCLEOTIDE SEQUENCE [GENOMIC DNA]</scope>
</reference>
<reference key="3">
    <citation type="submission" date="1997-01" db="EMBL/GenBank/DDBJ databases">
        <title>Sequence of minutes 4-25 of Escherichia coli.</title>
        <authorList>
            <person name="Chung E."/>
            <person name="Allen E."/>
            <person name="Araujo R."/>
            <person name="Aparicio A.M."/>
            <person name="Davis K."/>
            <person name="Duncan M."/>
            <person name="Federspiel N."/>
            <person name="Hyman R."/>
            <person name="Kalman S."/>
            <person name="Komp C."/>
            <person name="Kurdi O."/>
            <person name="Lew H."/>
            <person name="Lin D."/>
            <person name="Namath A."/>
            <person name="Oefner P."/>
            <person name="Roberts D."/>
            <person name="Schramm S."/>
            <person name="Davis R.W."/>
        </authorList>
    </citation>
    <scope>NUCLEOTIDE SEQUENCE [LARGE SCALE GENOMIC DNA]</scope>
    <source>
        <strain>K12 / MG1655 / ATCC 47076</strain>
    </source>
</reference>
<reference key="4">
    <citation type="journal article" date="1997" name="Science">
        <title>The complete genome sequence of Escherichia coli K-12.</title>
        <authorList>
            <person name="Blattner F.R."/>
            <person name="Plunkett G. III"/>
            <person name="Bloch C.A."/>
            <person name="Perna N.T."/>
            <person name="Burland V."/>
            <person name="Riley M."/>
            <person name="Collado-Vides J."/>
            <person name="Glasner J.D."/>
            <person name="Rode C.K."/>
            <person name="Mayhew G.F."/>
            <person name="Gregor J."/>
            <person name="Davis N.W."/>
            <person name="Kirkpatrick H.A."/>
            <person name="Goeden M.A."/>
            <person name="Rose D.J."/>
            <person name="Mau B."/>
            <person name="Shao Y."/>
        </authorList>
    </citation>
    <scope>NUCLEOTIDE SEQUENCE [LARGE SCALE GENOMIC DNA]</scope>
    <source>
        <strain>K12 / MG1655 / ATCC 47076</strain>
    </source>
</reference>
<reference key="5">
    <citation type="journal article" date="2006" name="Mol. Syst. Biol.">
        <title>Highly accurate genome sequences of Escherichia coli K-12 strains MG1655 and W3110.</title>
        <authorList>
            <person name="Hayashi K."/>
            <person name="Morooka N."/>
            <person name="Yamamoto Y."/>
            <person name="Fujita K."/>
            <person name="Isono K."/>
            <person name="Choi S."/>
            <person name="Ohtsubo E."/>
            <person name="Baba T."/>
            <person name="Wanner B.L."/>
            <person name="Mori H."/>
            <person name="Horiuchi T."/>
        </authorList>
    </citation>
    <scope>NUCLEOTIDE SEQUENCE [LARGE SCALE GENOMIC DNA]</scope>
    <source>
        <strain>K12 / W3110 / ATCC 27325 / DSM 5911</strain>
    </source>
</reference>
<reference key="6">
    <citation type="journal article" date="1990" name="Biochemistry">
        <title>Subcloning of the enterobactin biosynthetic gene entB: expression, purification, characterization, and substrate specificity of isochorismatase.</title>
        <authorList>
            <person name="Rusnak F."/>
            <person name="Liu J."/>
            <person name="Quinn N."/>
            <person name="Berchtold G.A."/>
            <person name="Walsh C.T."/>
        </authorList>
    </citation>
    <scope>PROTEIN SEQUENCE OF 2-13</scope>
    <scope>FUNCTION</scope>
    <scope>CATALYTIC ACTIVITY</scope>
    <scope>BIOPHYSICOCHEMICAL PROPERTIES</scope>
    <scope>ACTIVITY REGULATION</scope>
    <scope>SUBUNIT</scope>
</reference>
<reference key="7">
    <citation type="journal article" date="1989" name="Biochemistry">
        <title>Subcloning, expression, and purification of the enterobactin biosynthetic enzyme 2,3-dihydroxybenzoate-AMP ligase: demonstration of enzyme-bound (2,3-dihydroxybenzoyl)adenylate product.</title>
        <authorList>
            <person name="Rusnak F."/>
            <person name="Faraci W.S."/>
            <person name="Walsh C.T."/>
        </authorList>
    </citation>
    <scope>FUNCTION</scope>
</reference>
<reference key="8">
    <citation type="journal article" date="1990" name="J. Bacteriol.">
        <title>EntG activity of Escherichia coli enterobactin synthetase.</title>
        <authorList>
            <person name="Staab J.F."/>
            <person name="Earhart C.F."/>
        </authorList>
    </citation>
    <scope>FUNCTION</scope>
</reference>
<reference key="9">
    <citation type="journal article" date="1997" name="Biochemistry">
        <title>Enterobactin biosynthesis in Escherichia coli: isochorismate lyase (EntB) is a bifunctional enzyme that is phosphopantetheinylated by EntD and then acylated by EntE using ATP and 2,3-dihydroxybenzoate.</title>
        <authorList>
            <person name="Gehring A.M."/>
            <person name="Bradley K.A."/>
            <person name="Walsh C.T."/>
        </authorList>
    </citation>
    <scope>FUNCTION</scope>
    <scope>CATALYTIC ACTIVITY</scope>
</reference>
<reference key="10">
    <citation type="journal article" date="1998" name="Biochemistry">
        <title>Reconstitution and characterization of the Escherichia coli enterobactin synthetase from EntB, EntE, and EntF.</title>
        <authorList>
            <person name="Gehring A.M."/>
            <person name="Mori I."/>
            <person name="Walsh C.T."/>
        </authorList>
    </citation>
    <scope>FUNCTION</scope>
    <scope>CATALYTIC ACTIVITY</scope>
    <scope>SUBUNIT</scope>
</reference>
<reference key="11">
    <citation type="journal article" date="2000" name="J. Bacteriol.">
        <title>Membrane association of the Escherichia coli enterobactin synthase proteins EntB/G, EntE, and EntF.</title>
        <authorList>
            <person name="Hantash F.M."/>
            <person name="Earhart C.F."/>
        </authorList>
    </citation>
    <scope>SUBCELLULAR LOCATION</scope>
</reference>
<reference key="12">
    <citation type="journal article" date="2006" name="J. Am. Chem. Soc.">
        <title>Localized protein interaction surfaces on the EntB carrier protein revealed by combinatorial mutagenesis and selection.</title>
        <authorList>
            <person name="Lai J.R."/>
            <person name="Fischbach M.A."/>
            <person name="Liu D.R."/>
            <person name="Walsh C.T."/>
        </authorList>
    </citation>
    <scope>MUTAGENESIS OF GLY-242 AND ASP-244</scope>
</reference>
<reference key="13">
    <citation type="journal article" date="2006" name="Proc. Natl. Acad. Sci. U.S.A.">
        <title>A protein interaction surface in nonribosomal peptide synthesis mapped by combinatorial mutagenesis and selection.</title>
        <authorList>
            <person name="Lai J.R."/>
            <person name="Fischbach M.A."/>
            <person name="Liu D.R."/>
            <person name="Walsh C.T."/>
        </authorList>
    </citation>
    <scope>FUNCTION</scope>
    <scope>MUTAGENESIS OF MET-249; PHE-264; ALA-268 AND LYS-269</scope>
</reference>
<reference key="14">
    <citation type="journal article" date="2009" name="J. Mol. Biol.">
        <title>Ligand-induced conformational rearrangements promote interaction between the Escherichia coli enterobactin biosynthetic proteins EntE and EntB.</title>
        <authorList>
            <person name="Khalil S."/>
            <person name="Pawelek P.D."/>
        </authorList>
    </citation>
    <scope>FUNCTION</scope>
</reference>
<reference key="15">
    <citation type="journal article" date="2012" name="Microbiology">
        <title>Escherichia coli enterobactin synthesis and uptake mutants are hypersensitive to an antimicrobial peptide that limits the availability of iron in addition to blocking Holliday junction resolution.</title>
        <authorList>
            <person name="Orchard S.S."/>
            <person name="Rostron J.E."/>
            <person name="Segall A.M."/>
        </authorList>
    </citation>
    <scope>DISRUPTION PHENOTYPE</scope>
</reference>
<reference key="16">
    <citation type="journal article" date="2022" name="Biochimie">
        <title>Evidence of an intracellular interaction between the Escherichia coli enzymes EntC and EntB and identification of a potential electrostatic channeling surface.</title>
        <authorList>
            <person name="Ouellette S."/>
            <person name="Pakarian P."/>
            <person name="Bin X."/>
            <person name="Pawelek P.D."/>
        </authorList>
    </citation>
    <scope>INTERACTION WITH ENTC</scope>
</reference>
<reference evidence="23" key="17">
    <citation type="journal article" date="2006" name="Chem. Biol.">
        <title>Structure of the EntB multidomain nonribosomal peptide synthetase and functional analysis of its interaction with the EntE adenylation domain.</title>
        <authorList>
            <person name="Drake E.J."/>
            <person name="Nicolai D.A."/>
            <person name="Gulick A.M."/>
        </authorList>
    </citation>
    <scope>X-RAY CRYSTALLOGRAPHY (2.30 ANGSTROMS) IN COMPLEX WITH MAGNESIUM ION</scope>
    <scope>FUNCTION</scope>
    <scope>CATALYTIC ACTIVITY</scope>
    <scope>MUTAGENESIS OF ASP-240; ASP-263 AND PHE-264</scope>
    <scope>COFACTOR</scope>
    <scope>SUBUNIT</scope>
</reference>
<reference evidence="24" key="18">
    <citation type="journal article" date="2012" name="Chem. Biol.">
        <title>Structural and functional investigation of the intermolecular interaction between NRPS adenylation and carrier protein domains.</title>
        <authorList>
            <person name="Sundlov J.A."/>
            <person name="Shi C."/>
            <person name="Wilson D.J."/>
            <person name="Aldrich C.C."/>
            <person name="Gulick A.M."/>
        </authorList>
    </citation>
    <scope>X-RAY CRYSTALLOGRAPHY (3.10 ANGSTROMS) OF 209-285 IN A CHIMERIC CONSTRUCT WITH ENTE IN COMPLEX WITH PHOSPHOPANTETHEINE</scope>
    <scope>SUBUNIT</scope>
    <scope>PHOSPHOPANTETHEINYLATION AT SER-245</scope>
</reference>
<comment type="function">
    <text evidence="3 4 6 7 8 12 14 15">Involved in the biosynthesis of the siderophore enterobactin (enterochelin), which is a macrocyclic trimeric lactone of N-(2,3-dihydroxybenzoyl)-serine. The serine trilactone serves as a scaffolding for the three catechol functionalities that provide hexadentate coordination for the tightly ligated iron(3+) atoms. EntB is a bifunctional protein that serves as an isochorismate lyase and an aryl carrier protein (ArCP). Catalyzes the conversion of isochorismate to 2,3-dihydro-2,3-dihydroxybenzoate (2,3-diDHB), the precursor of 2,3-dihydroxybenzoate (DHB). In the enterobactin assembly, EntB functions as an aryl carrier protein phosphopantetheinylated near the C terminus by EntD to yield holo-EntB, which is then acylated by EntE with 2,3-dihydroxybenzoyl-AMP to form DHB-holo-EntB. Then this product will serve in the formation of the amide bond between 2,3-dihydroxybenzoate (DHB) and L-serine.</text>
</comment>
<comment type="catalytic activity">
    <reaction evidence="4 7 14 15">
        <text>3 2,3-dihydroxybenzoate + 3 L-serine + 6 ATP = enterobactin + 6 AMP + 6 diphosphate + 4 H(+)</text>
        <dbReference type="Rhea" id="RHEA:30571"/>
        <dbReference type="ChEBI" id="CHEBI:15378"/>
        <dbReference type="ChEBI" id="CHEBI:30616"/>
        <dbReference type="ChEBI" id="CHEBI:33019"/>
        <dbReference type="ChEBI" id="CHEBI:33384"/>
        <dbReference type="ChEBI" id="CHEBI:36654"/>
        <dbReference type="ChEBI" id="CHEBI:77805"/>
        <dbReference type="ChEBI" id="CHEBI:456215"/>
        <dbReference type="EC" id="6.3.2.14"/>
    </reaction>
</comment>
<comment type="catalytic activity">
    <reaction evidence="4 7 14 15">
        <text>isochorismate + H2O = (2S,3S)-2,3-dihydroxy-2,3-dihydrobenzoate + pyruvate</text>
        <dbReference type="Rhea" id="RHEA:11112"/>
        <dbReference type="ChEBI" id="CHEBI:15361"/>
        <dbReference type="ChEBI" id="CHEBI:15377"/>
        <dbReference type="ChEBI" id="CHEBI:29780"/>
        <dbReference type="ChEBI" id="CHEBI:58764"/>
        <dbReference type="EC" id="3.3.2.1"/>
    </reaction>
</comment>
<comment type="cofactor">
    <cofactor evidence="4">
        <name>Mg(2+)</name>
        <dbReference type="ChEBI" id="CHEBI:18420"/>
    </cofactor>
</comment>
<comment type="activity regulation">
    <text evidence="7">Inhibited by 3-[(carboxyethenyl)oxy]-6-hydroxy-1-benzoic acid and 3-[(carboxyethenyl)oxy]benzoic acid.</text>
</comment>
<comment type="biophysicochemical properties">
    <kinetics>
        <KM evidence="7">14.7 uM for isochorismate (at pH 7 and 37 degrees Celsius)</KM>
        <KM evidence="7">23 uM for 4,5-dihydroisochorismate (at pH 7 and 37 degrees Celsius)</KM>
        <KM evidence="7">86 uM for 3-[(carboxyethenyl)oxy]-1-cyclohexene-1-carboxylic acid (at pH 7 and 37 degrees Celsius)</KM>
        <KM evidence="7">120 uM for 3-[(1-carboxylatoethenyl)oxy]-cyclohepta-1,6-diene-1-carboxylate (at pH 7 and 37 degrees Celsius)</KM>
        <KM evidence="7">280 uM for cis-3-[(carboxyethenyl)oxy]-4-cyclohexene-1-carboxylic acid (at pH 7 and 37 degrees Celsius)</KM>
        <Vmax evidence="7">18.5 umol/min/mg enzyme (at pH 7 and 37 degrees Celsius)</Vmax>
        <text evidence="7">kcat is 600 min(-1) for isochorismatase activity with isochorismate as substrate (at pH 7 and 37 degrees Celsius). kcat is 540 min(-1) for isochorismatase activity with 3-[(1-carboxylatoethenyl)oxy]-cyclohepta-1,6-diene-1-carboxylate as substrate (at pH 7 and 37 degrees Celsius). kcat is 310 min(-1) for isochorismatase activity with 4,5-dihydroisochorismate as substrate (at pH 7 and 37 degrees Celsius).</text>
    </kinetics>
    <phDependence>
        <text evidence="7">Optimum pH is between 6.5 and 7.5. At pH 5.5, EntB retains 50% of isochorismatase activity.</text>
    </phDependence>
</comment>
<comment type="pathway">
    <text evidence="22">Siderophore biosynthesis; enterobactin biosynthesis.</text>
</comment>
<comment type="subunit">
    <text evidence="4 7 10 13 15">Proteins EntB, EntD, EntE, and EntF form a multienzyme complex called enterobactin synthase. Homodimer (PubMed:16632253). Also forms a specific pairwise interaction with EntC; this interaction likely facilitates substrate channeling to connect the EntB and EntC active sites (PubMed:35952947).</text>
</comment>
<comment type="interaction">
    <interactant intactId="EBI-547993">
        <id>P0ADI4</id>
    </interactant>
    <interactant intactId="EBI-547993">
        <id>P0ADI4</id>
        <label>entB</label>
    </interactant>
    <organismsDiffer>false</organismsDiffer>
    <experiments>3</experiments>
</comment>
<comment type="interaction">
    <interactant intactId="EBI-547993">
        <id>P0ADI4</id>
    </interactant>
    <interactant intactId="EBI-550322">
        <id>P10378</id>
        <label>entE</label>
    </interactant>
    <organismsDiffer>false</organismsDiffer>
    <experiments>3</experiments>
</comment>
<comment type="interaction">
    <interactant intactId="EBI-547993">
        <id>P0ADI4</id>
    </interactant>
    <interactant intactId="EBI-1118982">
        <id>P0A8Y8</id>
        <label>entH</label>
    </interactant>
    <organismsDiffer>false</organismsDiffer>
    <experiments>3</experiments>
</comment>
<comment type="subcellular location">
    <subcellularLocation>
        <location evidence="2">Cytoplasm</location>
    </subcellularLocation>
</comment>
<comment type="induction">
    <text evidence="11">Under conditions of iron deficiency and by the fur protein.</text>
</comment>
<comment type="PTM">
    <text evidence="10">4'-phosphopantetheine is transferred from CoA to a specific serine of apo-EntB by EntD. Holo-EntB so formed is then acylated with 2,3-dihydroxybenzoate in a reaction catalyzed by EntE.</text>
</comment>
<comment type="disruption phenotype">
    <text evidence="9">Cells lacking this gene are hypersensitive to the antimicrobial peptide wrwycr.</text>
</comment>
<comment type="similarity">
    <text evidence="21">In the N-terminal section; belongs to the isochorismatase family.</text>
</comment>
<sequence>MAIPKLQAYALPESHDIPQNKVDWAFEPQRAALLIHDMQDYFVSFWGENCPMMEQVIANIAALRDYCKQHNIPVYYTAQPKEQSDEDRALLNDMWGPGLTRSPEQQKVVDRLTPDADDTVLVKWRYSAFHRSPLEQMLKESGRNQLIITGVYAHIGCMTTATDAFMRDIKPFMVADALADFSRDEHLMSLKYVAGRSGRVVMTEELLPAPIPASKAALREVILPLLDESDEPFDDDNLIDYGLDSVRMMALAARWRKVHGDIDFVMLAKNPTIDAWWKLLSREVK</sequence>
<proteinExistence type="evidence at protein level"/>